<sequence>MTDISFTTSLPAGPAPGAIVQPEGPAKVTVRDLNFYYGDNRALKDINLNLAANRVTAFIGPSGCGKSTLLRIFNRMYDLYPGQRAEGQVMLDGHNILDPKLDLNLLRARVGMVFQKPTPFPMTIYENIAFGIRLYEKISKSEMDGRVEKALRGGALWNEVKDKLSASGLSLSGGQQQRLCIARTIAVRPEVILFDEPCSALDPISTAKIEELIDELKEEYTIAIVTHNMQQAARVSESTAFMYLGELIEFGPTDKIFTSPNDRRTQDYITGRFG</sequence>
<protein>
    <recommendedName>
        <fullName evidence="1">Phosphate import ATP-binding protein PstB</fullName>
        <ecNumber evidence="1">7.3.2.1</ecNumber>
    </recommendedName>
    <alternativeName>
        <fullName evidence="1">ABC phosphate transporter</fullName>
    </alternativeName>
    <alternativeName>
        <fullName evidence="1">Phosphate-transporting ATPase</fullName>
    </alternativeName>
</protein>
<feature type="chain" id="PRO_0000272515" description="Phosphate import ATP-binding protein PstB">
    <location>
        <begin position="1"/>
        <end position="274"/>
    </location>
</feature>
<feature type="domain" description="ABC transporter" evidence="1">
    <location>
        <begin position="28"/>
        <end position="269"/>
    </location>
</feature>
<feature type="binding site" evidence="1">
    <location>
        <begin position="60"/>
        <end position="67"/>
    </location>
    <ligand>
        <name>ATP</name>
        <dbReference type="ChEBI" id="CHEBI:30616"/>
    </ligand>
</feature>
<organism>
    <name type="scientific">Rhodopseudomonas palustris (strain HaA2)</name>
    <dbReference type="NCBI Taxonomy" id="316058"/>
    <lineage>
        <taxon>Bacteria</taxon>
        <taxon>Pseudomonadati</taxon>
        <taxon>Pseudomonadota</taxon>
        <taxon>Alphaproteobacteria</taxon>
        <taxon>Hyphomicrobiales</taxon>
        <taxon>Nitrobacteraceae</taxon>
        <taxon>Rhodopseudomonas</taxon>
    </lineage>
</organism>
<accession>Q2J220</accession>
<keyword id="KW-0067">ATP-binding</keyword>
<keyword id="KW-0997">Cell inner membrane</keyword>
<keyword id="KW-1003">Cell membrane</keyword>
<keyword id="KW-0472">Membrane</keyword>
<keyword id="KW-0547">Nucleotide-binding</keyword>
<keyword id="KW-0592">Phosphate transport</keyword>
<keyword id="KW-1185">Reference proteome</keyword>
<keyword id="KW-1278">Translocase</keyword>
<keyword id="KW-0813">Transport</keyword>
<gene>
    <name evidence="1" type="primary">pstB</name>
    <name type="ordered locus">RPB_0779</name>
</gene>
<dbReference type="EC" id="7.3.2.1" evidence="1"/>
<dbReference type="EMBL" id="CP000250">
    <property type="protein sequence ID" value="ABD05490.1"/>
    <property type="molecule type" value="Genomic_DNA"/>
</dbReference>
<dbReference type="RefSeq" id="WP_011439679.1">
    <property type="nucleotide sequence ID" value="NC_007778.1"/>
</dbReference>
<dbReference type="SMR" id="Q2J220"/>
<dbReference type="STRING" id="316058.RPB_0779"/>
<dbReference type="KEGG" id="rpb:RPB_0779"/>
<dbReference type="eggNOG" id="COG1117">
    <property type="taxonomic scope" value="Bacteria"/>
</dbReference>
<dbReference type="HOGENOM" id="CLU_000604_1_22_5"/>
<dbReference type="OrthoDB" id="9802264at2"/>
<dbReference type="Proteomes" id="UP000008809">
    <property type="component" value="Chromosome"/>
</dbReference>
<dbReference type="GO" id="GO:0005886">
    <property type="term" value="C:plasma membrane"/>
    <property type="evidence" value="ECO:0007669"/>
    <property type="project" value="UniProtKB-SubCell"/>
</dbReference>
<dbReference type="GO" id="GO:0005524">
    <property type="term" value="F:ATP binding"/>
    <property type="evidence" value="ECO:0007669"/>
    <property type="project" value="UniProtKB-KW"/>
</dbReference>
<dbReference type="GO" id="GO:0016887">
    <property type="term" value="F:ATP hydrolysis activity"/>
    <property type="evidence" value="ECO:0007669"/>
    <property type="project" value="InterPro"/>
</dbReference>
<dbReference type="GO" id="GO:0015415">
    <property type="term" value="F:ATPase-coupled phosphate ion transmembrane transporter activity"/>
    <property type="evidence" value="ECO:0007669"/>
    <property type="project" value="UniProtKB-EC"/>
</dbReference>
<dbReference type="GO" id="GO:0035435">
    <property type="term" value="P:phosphate ion transmembrane transport"/>
    <property type="evidence" value="ECO:0007669"/>
    <property type="project" value="InterPro"/>
</dbReference>
<dbReference type="CDD" id="cd03260">
    <property type="entry name" value="ABC_PstB_phosphate_transporter"/>
    <property type="match status" value="1"/>
</dbReference>
<dbReference type="FunFam" id="3.40.50.300:FF:000132">
    <property type="entry name" value="Phosphate import ATP-binding protein PstB"/>
    <property type="match status" value="1"/>
</dbReference>
<dbReference type="Gene3D" id="3.40.50.300">
    <property type="entry name" value="P-loop containing nucleotide triphosphate hydrolases"/>
    <property type="match status" value="1"/>
</dbReference>
<dbReference type="InterPro" id="IPR003593">
    <property type="entry name" value="AAA+_ATPase"/>
</dbReference>
<dbReference type="InterPro" id="IPR003439">
    <property type="entry name" value="ABC_transporter-like_ATP-bd"/>
</dbReference>
<dbReference type="InterPro" id="IPR017871">
    <property type="entry name" value="ABC_transporter-like_CS"/>
</dbReference>
<dbReference type="InterPro" id="IPR027417">
    <property type="entry name" value="P-loop_NTPase"/>
</dbReference>
<dbReference type="InterPro" id="IPR005670">
    <property type="entry name" value="PstB-like"/>
</dbReference>
<dbReference type="NCBIfam" id="TIGR00972">
    <property type="entry name" value="3a0107s01c2"/>
    <property type="match status" value="1"/>
</dbReference>
<dbReference type="PANTHER" id="PTHR43423">
    <property type="entry name" value="ABC TRANSPORTER I FAMILY MEMBER 17"/>
    <property type="match status" value="1"/>
</dbReference>
<dbReference type="PANTHER" id="PTHR43423:SF3">
    <property type="entry name" value="PHOSPHATE IMPORT ATP-BINDING PROTEIN PSTB"/>
    <property type="match status" value="1"/>
</dbReference>
<dbReference type="Pfam" id="PF00005">
    <property type="entry name" value="ABC_tran"/>
    <property type="match status" value="1"/>
</dbReference>
<dbReference type="SMART" id="SM00382">
    <property type="entry name" value="AAA"/>
    <property type="match status" value="1"/>
</dbReference>
<dbReference type="SUPFAM" id="SSF52540">
    <property type="entry name" value="P-loop containing nucleoside triphosphate hydrolases"/>
    <property type="match status" value="1"/>
</dbReference>
<dbReference type="PROSITE" id="PS00211">
    <property type="entry name" value="ABC_TRANSPORTER_1"/>
    <property type="match status" value="1"/>
</dbReference>
<dbReference type="PROSITE" id="PS50893">
    <property type="entry name" value="ABC_TRANSPORTER_2"/>
    <property type="match status" value="1"/>
</dbReference>
<dbReference type="PROSITE" id="PS51238">
    <property type="entry name" value="PSTB"/>
    <property type="match status" value="1"/>
</dbReference>
<reference key="1">
    <citation type="submission" date="2006-01" db="EMBL/GenBank/DDBJ databases">
        <title>Complete sequence of Rhodopseudomonas palustris HaA2.</title>
        <authorList>
            <consortium name="US DOE Joint Genome Institute"/>
            <person name="Copeland A."/>
            <person name="Lucas S."/>
            <person name="Lapidus A."/>
            <person name="Barry K."/>
            <person name="Detter J.C."/>
            <person name="Glavina T."/>
            <person name="Hammon N."/>
            <person name="Israni S."/>
            <person name="Pitluck S."/>
            <person name="Chain P."/>
            <person name="Malfatti S."/>
            <person name="Shin M."/>
            <person name="Vergez L."/>
            <person name="Schmutz J."/>
            <person name="Larimer F."/>
            <person name="Land M."/>
            <person name="Hauser L."/>
            <person name="Pelletier D.A."/>
            <person name="Kyrpides N."/>
            <person name="Anderson I."/>
            <person name="Oda Y."/>
            <person name="Harwood C.S."/>
            <person name="Richardson P."/>
        </authorList>
    </citation>
    <scope>NUCLEOTIDE SEQUENCE [LARGE SCALE GENOMIC DNA]</scope>
    <source>
        <strain>HaA2</strain>
    </source>
</reference>
<proteinExistence type="inferred from homology"/>
<comment type="function">
    <text evidence="1">Part of the ABC transporter complex PstSACB involved in phosphate import. Responsible for energy coupling to the transport system.</text>
</comment>
<comment type="catalytic activity">
    <reaction evidence="1">
        <text>phosphate(out) + ATP + H2O = ADP + 2 phosphate(in) + H(+)</text>
        <dbReference type="Rhea" id="RHEA:24440"/>
        <dbReference type="ChEBI" id="CHEBI:15377"/>
        <dbReference type="ChEBI" id="CHEBI:15378"/>
        <dbReference type="ChEBI" id="CHEBI:30616"/>
        <dbReference type="ChEBI" id="CHEBI:43474"/>
        <dbReference type="ChEBI" id="CHEBI:456216"/>
        <dbReference type="EC" id="7.3.2.1"/>
    </reaction>
</comment>
<comment type="subunit">
    <text evidence="1">The complex is composed of two ATP-binding proteins (PstB), two transmembrane proteins (PstC and PstA) and a solute-binding protein (PstS).</text>
</comment>
<comment type="subcellular location">
    <subcellularLocation>
        <location evidence="1">Cell inner membrane</location>
        <topology evidence="1">Peripheral membrane protein</topology>
    </subcellularLocation>
</comment>
<comment type="similarity">
    <text evidence="1">Belongs to the ABC transporter superfamily. Phosphate importer (TC 3.A.1.7) family.</text>
</comment>
<name>PSTB_RHOP2</name>
<evidence type="ECO:0000255" key="1">
    <source>
        <dbReference type="HAMAP-Rule" id="MF_01702"/>
    </source>
</evidence>